<comment type="function">
    <text evidence="3">The large envelope protein exists in two topological conformations, one which is termed 'external' or Le-HBsAg and the other 'internal' or Li-HBsAg. In its external conformation the protein attaches the virus to cell receptors and thereby initiating infection. This interaction determines the species specificity and liver tropism. This attachment induces virion internalization predominantly through caveolin-mediated endocytosis. The large envelope protein also assures fusion between virion membrane and endosomal membrane. In its internal conformation the protein plays a role in virion morphogenesis and mediates the contact with the nucleocapsid like a matrix protein.</text>
</comment>
<comment type="function">
    <text evidence="3">The middle envelope protein plays an important role in the budding of the virion. It is involved in the induction of budding in a nucleocapsid independent way. In this process the majority of envelope proteins bud to form subviral lipoprotein particles of 22 nm of diameter that do not contain a nucleocapsid.</text>
</comment>
<comment type="subunit">
    <molecule>Isoform L</molecule>
    <text evidence="2">In its internal form (Li-HBsAg), interacts with the capsid protein and with the isoform S. Interacts with host chaperone CANX.</text>
</comment>
<comment type="subunit">
    <molecule>Isoform M</molecule>
    <text evidence="2">Associates with host chaperone CANX through its pre-S2 N glycan; this association may be essential for isoform M proper secretion.</text>
</comment>
<comment type="subunit">
    <molecule>Isoform S</molecule>
    <text evidence="2">Interacts with isoform L. Interacts with the antigens of satellite virus HDV (HDVAgs); this interaction is required for encapsidation of HDV genomic RNA.</text>
</comment>
<comment type="subcellular location">
    <subcellularLocation>
        <location evidence="3">Virion membrane</location>
    </subcellularLocation>
</comment>
<comment type="alternative products">
    <event type="alternative splicing"/>
    <event type="alternative initiation"/>
    <isoform>
        <id>O92921-1</id>
        <name>L</name>
        <name>Large envelope protein</name>
        <name>LHB</name>
        <name>L-HBsAg</name>
        <sequence type="displayed"/>
    </isoform>
    <isoform>
        <id>O92921-2</id>
        <name>M</name>
        <name>Middle envelope protein</name>
        <name>MHB</name>
        <name>M-HBsAg</name>
        <sequence type="described" ref="VSP_031412"/>
    </isoform>
    <isoform>
        <id>O92921-3</id>
        <name>S</name>
        <name>Small envelope protein</name>
        <name>SHB</name>
        <name>S-HBsAg</name>
        <sequence type="described" ref="VSP_031411"/>
    </isoform>
</comment>
<comment type="domain">
    <text evidence="3">The large envelope protein is synthesized with the pre-S region at the cytosolic side of the endoplasmic reticulum and, hence will be within the virion after budding. Therefore the pre-S region is not N-glycosylated. Later a post-translational translocation of N-terminal pre-S and TM1 domains occur in about 50% of proteins at the virion surface. These molecules change their topology by an unknown mechanism, resulting in exposure of pre-S region at virion surface. For isoform M in contrast, the pre-S2 region is translocated cotranslationally to the endoplasmic reticulum lumen and is N-glycosylated.</text>
</comment>
<comment type="PTM">
    <text evidence="1 3">Isoform M is N-terminally acetylated by host at a ratio of 90%, and N-glycosylated by host at the pre-S2 region.</text>
</comment>
<comment type="PTM">
    <text evidence="3">Myristoylated.</text>
</comment>
<comment type="biotechnology">
    <text>Systematic vaccination of individuals at risk of exposure to the virus has been the main method of controlling the morbidity and mortality associated with hepatitis B. The first hepatitis B vaccine was manufactured by the purification and inactivation of HBsAg obtained from the plasma of chronic hepatitis B virus carriers. The vaccine is now produced by recombinant DNA techniques and expression of the S isoform in yeast cells. The pre-S region do not seem to induce strong enough antigenic response.</text>
</comment>
<comment type="similarity">
    <text evidence="3">Belongs to the orthohepadnavirus major surface antigen family.</text>
</comment>
<feature type="initiator methionine" description="Removed; by host" evidence="3">
    <location>
        <position position="1"/>
    </location>
</feature>
<feature type="chain" id="PRO_0000319088" description="Large envelope protein" evidence="3">
    <location>
        <begin position="2"/>
        <end position="389"/>
    </location>
</feature>
<feature type="topological domain" description="Intravirion; in internal conformation" evidence="3">
    <location>
        <begin position="2"/>
        <end position="242"/>
    </location>
</feature>
<feature type="topological domain" description="Virion surface; in external conformation" evidence="3">
    <location>
        <begin position="2"/>
        <end position="170"/>
    </location>
</feature>
<feature type="transmembrane region" description="Helical; Name=TM1; Note=In external conformation" evidence="3">
    <location>
        <begin position="171"/>
        <end position="191"/>
    </location>
</feature>
<feature type="topological domain" description="Intravirion; in external conformation" evidence="3">
    <location>
        <begin position="192"/>
        <end position="242"/>
    </location>
</feature>
<feature type="transmembrane region" description="Helical; Name=TM2" evidence="3">
    <location>
        <begin position="243"/>
        <end position="263"/>
    </location>
</feature>
<feature type="topological domain" description="Virion surface" evidence="3">
    <location>
        <begin position="264"/>
        <end position="337"/>
    </location>
</feature>
<feature type="transmembrane region" description="Helical" evidence="3">
    <location>
        <begin position="338"/>
        <end position="358"/>
    </location>
</feature>
<feature type="topological domain" description="Intravirion" evidence="3">
    <location>
        <begin position="359"/>
        <end position="364"/>
    </location>
</feature>
<feature type="transmembrane region" description="Helical; Name=TM3" evidence="3">
    <location>
        <begin position="365"/>
        <end position="387"/>
    </location>
</feature>
<feature type="topological domain" description="Virion surface" evidence="3">
    <location>
        <begin position="388"/>
        <end position="389"/>
    </location>
</feature>
<feature type="region of interest" description="Pre-S" evidence="3">
    <location>
        <begin position="2"/>
        <end position="163"/>
    </location>
</feature>
<feature type="region of interest" description="Pre-S1" evidence="3">
    <location>
        <begin position="2"/>
        <end position="108"/>
    </location>
</feature>
<feature type="region of interest" description="Disordered" evidence="4">
    <location>
        <begin position="77"/>
        <end position="101"/>
    </location>
</feature>
<feature type="region of interest" description="Pre-S2" evidence="3">
    <location>
        <begin position="109"/>
        <end position="163"/>
    </location>
</feature>
<feature type="compositionally biased region" description="Polar residues" evidence="4">
    <location>
        <begin position="85"/>
        <end position="95"/>
    </location>
</feature>
<feature type="lipid moiety-binding region" description="N-myristoyl glycine; by host" evidence="3">
    <location>
        <position position="2"/>
    </location>
</feature>
<feature type="glycosylation site" description="N-linked (GlcNAc...) asparagine; by host" evidence="3">
    <location>
        <position position="309"/>
    </location>
</feature>
<feature type="splice variant" id="VSP_031411" description="In isoform S." evidence="5">
    <location>
        <begin position="1"/>
        <end position="163"/>
    </location>
</feature>
<feature type="splice variant" id="VSP_031412" description="In isoform M." evidence="5">
    <location>
        <begin position="1"/>
        <end position="108"/>
    </location>
</feature>
<feature type="modified residue" description="N-acetylmethionine" evidence="1">
    <location sequence="O92921-2">
        <position position="1"/>
    </location>
</feature>
<dbReference type="EMBL" id="AF043594">
    <property type="protein sequence ID" value="AAC40811.1"/>
    <property type="molecule type" value="Genomic_DNA"/>
</dbReference>
<dbReference type="PIR" id="JQ1572">
    <property type="entry name" value="JQ1572"/>
</dbReference>
<dbReference type="PIR" id="JQ2063">
    <property type="entry name" value="JQ2063"/>
</dbReference>
<dbReference type="PIR" id="JQ2066">
    <property type="entry name" value="JQ2066"/>
</dbReference>
<dbReference type="PIR" id="JQ2067">
    <property type="entry name" value="JQ2067"/>
</dbReference>
<dbReference type="PIR" id="JQ2068">
    <property type="entry name" value="JQ2068"/>
</dbReference>
<dbReference type="PIR" id="JQ2069">
    <property type="entry name" value="JQ2069"/>
</dbReference>
<dbReference type="PIR" id="JQ2070">
    <property type="entry name" value="JQ2070"/>
</dbReference>
<dbReference type="PIR" id="JQ2072">
    <property type="entry name" value="JQ2072"/>
</dbReference>
<dbReference type="PIR" id="JQ2076">
    <property type="entry name" value="JQ2076"/>
</dbReference>
<dbReference type="PIR" id="JQ2077">
    <property type="entry name" value="JQ2077"/>
</dbReference>
<dbReference type="PIR" id="JQ2079">
    <property type="entry name" value="JQ2079"/>
</dbReference>
<dbReference type="PIR" id="JQ2081">
    <property type="entry name" value="JQ2081"/>
</dbReference>
<dbReference type="PIR" id="JQ2083">
    <property type="entry name" value="JQ2083"/>
</dbReference>
<dbReference type="SMR" id="O92921"/>
<dbReference type="GlyCosmos" id="O92921">
    <property type="glycosylation" value="1 site, No reported glycans"/>
</dbReference>
<dbReference type="Proteomes" id="UP000008283">
    <property type="component" value="Genome"/>
</dbReference>
<dbReference type="GO" id="GO:0016020">
    <property type="term" value="C:membrane"/>
    <property type="evidence" value="ECO:0007669"/>
    <property type="project" value="UniProtKB-UniRule"/>
</dbReference>
<dbReference type="GO" id="GO:0019031">
    <property type="term" value="C:viral envelope"/>
    <property type="evidence" value="ECO:0007669"/>
    <property type="project" value="UniProtKB-KW"/>
</dbReference>
<dbReference type="GO" id="GO:0055036">
    <property type="term" value="C:virion membrane"/>
    <property type="evidence" value="ECO:0007669"/>
    <property type="project" value="UniProtKB-SubCell"/>
</dbReference>
<dbReference type="GO" id="GO:0075513">
    <property type="term" value="P:caveolin-mediated endocytosis of virus by host cell"/>
    <property type="evidence" value="ECO:0007669"/>
    <property type="project" value="UniProtKB-KW"/>
</dbReference>
<dbReference type="GO" id="GO:0039654">
    <property type="term" value="P:fusion of virus membrane with host endosome membrane"/>
    <property type="evidence" value="ECO:0007669"/>
    <property type="project" value="UniProtKB-KW"/>
</dbReference>
<dbReference type="GO" id="GO:0019062">
    <property type="term" value="P:virion attachment to host cell"/>
    <property type="evidence" value="ECO:0007669"/>
    <property type="project" value="UniProtKB-UniRule"/>
</dbReference>
<dbReference type="HAMAP" id="MF_04075">
    <property type="entry name" value="HBV_HBSAG"/>
    <property type="match status" value="1"/>
</dbReference>
<dbReference type="InterPro" id="IPR000349">
    <property type="entry name" value="HBV_HBSAG"/>
</dbReference>
<dbReference type="Pfam" id="PF00695">
    <property type="entry name" value="vMSA"/>
    <property type="match status" value="1"/>
</dbReference>
<keyword id="KW-0007">Acetylation</keyword>
<keyword id="KW-0024">Alternative initiation</keyword>
<keyword id="KW-0025">Alternative splicing</keyword>
<keyword id="KW-1166">Caveolin-mediated endocytosis of virus by host</keyword>
<keyword id="KW-1170">Fusion of virus membrane with host endosomal membrane</keyword>
<keyword id="KW-1168">Fusion of virus membrane with host membrane</keyword>
<keyword id="KW-0325">Glycoprotein</keyword>
<keyword id="KW-0945">Host-virus interaction</keyword>
<keyword id="KW-0449">Lipoprotein</keyword>
<keyword id="KW-0472">Membrane</keyword>
<keyword id="KW-0519">Myristate</keyword>
<keyword id="KW-0812">Transmembrane</keyword>
<keyword id="KW-1133">Transmembrane helix</keyword>
<keyword id="KW-1161">Viral attachment to host cell</keyword>
<keyword id="KW-0261">Viral envelope protein</keyword>
<keyword id="KW-1162">Viral penetration into host cytoplasm</keyword>
<keyword id="KW-0946">Virion</keyword>
<keyword id="KW-1164">Virus endocytosis by host</keyword>
<keyword id="KW-1160">Virus entry into host cell</keyword>
<organism>
    <name type="scientific">Hepatitis B virus genotype D (isolate Germany/1-91/1991)</name>
    <name type="common">HBV-D</name>
    <dbReference type="NCBI Taxonomy" id="489490"/>
    <lineage>
        <taxon>Viruses</taxon>
        <taxon>Riboviria</taxon>
        <taxon>Pararnavirae</taxon>
        <taxon>Artverviricota</taxon>
        <taxon>Revtraviricetes</taxon>
        <taxon>Blubervirales</taxon>
        <taxon>Hepadnaviridae</taxon>
        <taxon>Orthohepadnavirus</taxon>
        <taxon>Hepatitis B virus</taxon>
        <taxon>hepatitis B virus genotype D</taxon>
    </lineage>
</organism>
<protein>
    <recommendedName>
        <fullName evidence="3">Large envelope protein</fullName>
    </recommendedName>
    <alternativeName>
        <fullName evidence="3">L glycoprotein</fullName>
    </alternativeName>
    <alternativeName>
        <fullName evidence="3">L-HBsAg</fullName>
        <shortName evidence="3">LHB</shortName>
    </alternativeName>
    <alternativeName>
        <fullName evidence="3">Large S protein</fullName>
    </alternativeName>
    <alternativeName>
        <fullName evidence="3">Large surface protein</fullName>
    </alternativeName>
    <alternativeName>
        <fullName evidence="3">Major surface antigen</fullName>
    </alternativeName>
</protein>
<sequence length="389" mass="42796">MGQNLSTSNPLGFFPDHQLDPAFRANTANPDWDFNPNKDTWPDANKVGAGAFGLGFTPPHGGLLGWSPQAQGIIQTLPANPPPASTNRQTGRQPTPLSPPLRNTHPQAMQWNSTTFHQTLQDPRVRGLYFPAGGSSSGTVNPVPTTASPISSIFSRIGDPALNMENITSGLLGPLLVLQAGFFLLTRILTIPQSLDSWWTSLNFLGGTTVCLGQNSQSPTSNHSPTSCPPTCPGYRWMCLRRFIIFLFILLLCLIFLLVLLDYQGMLPVCPLIPGSSTTSVGPCRTCTTTVQGTSMYPSCCCTKPSDGNCTCIPIPSSWAFGKFLWEWASARFSWLSLLVPFVQWFVGLSPTVWLSVIWMMWYWGPSLYRILSPFLPLLPIFFCLWVYI</sequence>
<reference key="1">
    <citation type="journal article" date="1998" name="Virology">
        <title>Analysis of hepatitis B virus populations in an interferon-alpha-treated patient reveals predominant mutations in the C-gene and changing e-antigenicity.</title>
        <authorList>
            <person name="Gunther S."/>
            <person name="Paulij W."/>
            <person name="Meisel H."/>
            <person name="Will H."/>
        </authorList>
    </citation>
    <scope>NUCLEOTIDE SEQUENCE [GENOMIC DNA]</scope>
</reference>
<reference key="2">
    <citation type="journal article" date="1996" name="Intervirology">
        <title>Functions of the large hepatitis B virus surface protein in viral particle morphogenesis.</title>
        <authorList>
            <person name="Bruss V."/>
            <person name="Gerhardt E."/>
            <person name="Vieluf K."/>
            <person name="Wunderlich G."/>
        </authorList>
    </citation>
    <scope>REVIEW</scope>
</reference>
<reference key="3">
    <citation type="journal article" date="1998" name="Adv. Exp. Med. Biol.">
        <title>Role of glycan processing in hepatitis B virus envelope protein trafficking.</title>
        <authorList>
            <person name="Block T.M."/>
            <person name="Lu X."/>
            <person name="Mehta A."/>
            <person name="Park J."/>
            <person name="Blumberg B.S."/>
            <person name="Dwek R."/>
        </authorList>
    </citation>
    <scope>REVIEW</scope>
</reference>
<reference key="4">
    <citation type="journal article" date="2004" name="Virus Res.">
        <title>Envelopment of the hepatitis B virus nucleocapsid.</title>
        <authorList>
            <person name="Bruss V."/>
        </authorList>
    </citation>
    <scope>REVIEW</scope>
</reference>
<reference key="5">
    <citation type="journal article" date="2006" name="Cancer Sci.">
        <title>Hepatitis B virus pre-S mutants, endoplasmic reticulum stress and hepatocarcinogenesis.</title>
        <authorList>
            <person name="Wang H.C."/>
            <person name="Huang W."/>
            <person name="Lai M.D."/>
            <person name="Su I.J."/>
        </authorList>
    </citation>
    <scope>REVIEW</scope>
</reference>
<organismHost>
    <name type="scientific">Homo sapiens</name>
    <name type="common">Human</name>
    <dbReference type="NCBI Taxonomy" id="9606"/>
</organismHost>
<organismHost>
    <name type="scientific">Pan troglodytes</name>
    <name type="common">Chimpanzee</name>
    <dbReference type="NCBI Taxonomy" id="9598"/>
</organismHost>
<accession>O92921</accession>
<evidence type="ECO:0000250" key="1">
    <source>
        <dbReference type="UniProtKB" id="P03138"/>
    </source>
</evidence>
<evidence type="ECO:0000250" key="2">
    <source>
        <dbReference type="UniProtKB" id="P03141"/>
    </source>
</evidence>
<evidence type="ECO:0000255" key="3">
    <source>
        <dbReference type="HAMAP-Rule" id="MF_04075"/>
    </source>
</evidence>
<evidence type="ECO:0000256" key="4">
    <source>
        <dbReference type="SAM" id="MobiDB-lite"/>
    </source>
</evidence>
<evidence type="ECO:0000305" key="5"/>
<proteinExistence type="evidence at protein level"/>
<gene>
    <name evidence="3" type="primary">S</name>
</gene>
<name>HBSAG_HBVD7</name>